<keyword id="KW-0009">Actin-binding</keyword>
<keyword id="KW-0175">Coiled coil</keyword>
<keyword id="KW-0963">Cytoplasm</keyword>
<keyword id="KW-0206">Cytoskeleton</keyword>
<keyword id="KW-0597">Phosphoprotein</keyword>
<keyword id="KW-1185">Reference proteome</keyword>
<keyword id="KW-0677">Repeat</keyword>
<keyword id="KW-0853">WD repeat</keyword>
<gene>
    <name type="primary">CORO1B</name>
</gene>
<comment type="function">
    <text evidence="1">Regulates leading edge dynamics and cell motility in fibroblasts. May be involved in cytokinesis and signal transduction (By similarity).</text>
</comment>
<comment type="subunit">
    <text evidence="1">Forms homooligomers, but does not form complexes with the other coronins. Interacts with Arp2/3 complex components, including ACTR2, ARPC1B and ARPC2. Binds actin (By similarity).</text>
</comment>
<comment type="subcellular location">
    <subcellularLocation>
        <location evidence="2">Cytoplasm</location>
        <location evidence="2">Cytoskeleton</location>
    </subcellularLocation>
    <subcellularLocation>
        <location evidence="2">Cytoplasm</location>
        <location evidence="2">Cytoskeleton</location>
        <location evidence="2">Stress fiber</location>
    </subcellularLocation>
    <text evidence="2">Localized to the leading edge in fibroblasts, as well as weakly along actin stress fibers.</text>
</comment>
<comment type="PTM">
    <text evidence="1">Phosphorylation on Ser-2 regulates the interaction with the Arp2/3 complex and cell motility in fibroblasts. Phosphorylation does not seem to affect subcellular location (By similarity).</text>
</comment>
<comment type="similarity">
    <text evidence="5">Belongs to the WD repeat coronin family.</text>
</comment>
<comment type="sequence caution" evidence="5">
    <conflict type="erroneous initiation">
        <sequence resource="EMBL-CDS" id="CAI29659"/>
    </conflict>
</comment>
<proteinExistence type="evidence at transcript level"/>
<organism>
    <name type="scientific">Pongo abelii</name>
    <name type="common">Sumatran orangutan</name>
    <name type="synonym">Pongo pygmaeus abelii</name>
    <dbReference type="NCBI Taxonomy" id="9601"/>
    <lineage>
        <taxon>Eukaryota</taxon>
        <taxon>Metazoa</taxon>
        <taxon>Chordata</taxon>
        <taxon>Craniata</taxon>
        <taxon>Vertebrata</taxon>
        <taxon>Euteleostomi</taxon>
        <taxon>Mammalia</taxon>
        <taxon>Eutheria</taxon>
        <taxon>Euarchontoglires</taxon>
        <taxon>Primates</taxon>
        <taxon>Haplorrhini</taxon>
        <taxon>Catarrhini</taxon>
        <taxon>Hominidae</taxon>
        <taxon>Pongo</taxon>
    </lineage>
</organism>
<dbReference type="EMBL" id="CR926022">
    <property type="protein sequence ID" value="CAI29659.1"/>
    <property type="status" value="ALT_INIT"/>
    <property type="molecule type" value="mRNA"/>
</dbReference>
<dbReference type="RefSeq" id="NP_001127097.1">
    <property type="nucleotide sequence ID" value="NM_001133625.1"/>
</dbReference>
<dbReference type="SMR" id="Q5NVK4"/>
<dbReference type="STRING" id="9601.ENSPPYP00000003469"/>
<dbReference type="GeneID" id="100174131"/>
<dbReference type="KEGG" id="pon:100174131"/>
<dbReference type="CTD" id="57175"/>
<dbReference type="eggNOG" id="KOG0303">
    <property type="taxonomic scope" value="Eukaryota"/>
</dbReference>
<dbReference type="InParanoid" id="Q5NVK4"/>
<dbReference type="OrthoDB" id="1850764at2759"/>
<dbReference type="Proteomes" id="UP000001595">
    <property type="component" value="Unplaced"/>
</dbReference>
<dbReference type="GO" id="GO:0005737">
    <property type="term" value="C:cytoplasm"/>
    <property type="evidence" value="ECO:0007669"/>
    <property type="project" value="UniProtKB-KW"/>
</dbReference>
<dbReference type="GO" id="GO:0001725">
    <property type="term" value="C:stress fiber"/>
    <property type="evidence" value="ECO:0007669"/>
    <property type="project" value="UniProtKB-SubCell"/>
</dbReference>
<dbReference type="GO" id="GO:0051015">
    <property type="term" value="F:actin filament binding"/>
    <property type="evidence" value="ECO:0007669"/>
    <property type="project" value="TreeGrafter"/>
</dbReference>
<dbReference type="GO" id="GO:0007015">
    <property type="term" value="P:actin filament organization"/>
    <property type="evidence" value="ECO:0007669"/>
    <property type="project" value="TreeGrafter"/>
</dbReference>
<dbReference type="GO" id="GO:0016477">
    <property type="term" value="P:cell migration"/>
    <property type="evidence" value="ECO:0007669"/>
    <property type="project" value="TreeGrafter"/>
</dbReference>
<dbReference type="FunFam" id="2.130.10.10:FF:000003">
    <property type="entry name" value="Coronin"/>
    <property type="match status" value="1"/>
</dbReference>
<dbReference type="Gene3D" id="2.130.10.10">
    <property type="entry name" value="YVTN repeat-like/Quinoprotein amine dehydrogenase"/>
    <property type="match status" value="1"/>
</dbReference>
<dbReference type="InterPro" id="IPR015505">
    <property type="entry name" value="Coronin"/>
</dbReference>
<dbReference type="InterPro" id="IPR015048">
    <property type="entry name" value="DUF1899"/>
</dbReference>
<dbReference type="InterPro" id="IPR015943">
    <property type="entry name" value="WD40/YVTN_repeat-like_dom_sf"/>
</dbReference>
<dbReference type="InterPro" id="IPR019775">
    <property type="entry name" value="WD40_repeat_CS"/>
</dbReference>
<dbReference type="InterPro" id="IPR036322">
    <property type="entry name" value="WD40_repeat_dom_sf"/>
</dbReference>
<dbReference type="InterPro" id="IPR001680">
    <property type="entry name" value="WD40_rpt"/>
</dbReference>
<dbReference type="PANTHER" id="PTHR10856">
    <property type="entry name" value="CORONIN"/>
    <property type="match status" value="1"/>
</dbReference>
<dbReference type="PANTHER" id="PTHR10856:SF24">
    <property type="entry name" value="CORONIN-1B"/>
    <property type="match status" value="1"/>
</dbReference>
<dbReference type="Pfam" id="PF08953">
    <property type="entry name" value="DUF1899"/>
    <property type="match status" value="1"/>
</dbReference>
<dbReference type="Pfam" id="PF00400">
    <property type="entry name" value="WD40"/>
    <property type="match status" value="3"/>
</dbReference>
<dbReference type="Pfam" id="PF16300">
    <property type="entry name" value="WD40_4"/>
    <property type="match status" value="1"/>
</dbReference>
<dbReference type="SMART" id="SM01166">
    <property type="entry name" value="DUF1899"/>
    <property type="match status" value="1"/>
</dbReference>
<dbReference type="SMART" id="SM01167">
    <property type="entry name" value="DUF1900"/>
    <property type="match status" value="1"/>
</dbReference>
<dbReference type="SMART" id="SM00320">
    <property type="entry name" value="WD40"/>
    <property type="match status" value="3"/>
</dbReference>
<dbReference type="SUPFAM" id="SSF50978">
    <property type="entry name" value="WD40 repeat-like"/>
    <property type="match status" value="1"/>
</dbReference>
<dbReference type="PROSITE" id="PS00678">
    <property type="entry name" value="WD_REPEATS_1"/>
    <property type="match status" value="1"/>
</dbReference>
<dbReference type="PROSITE" id="PS50082">
    <property type="entry name" value="WD_REPEATS_2"/>
    <property type="match status" value="2"/>
</dbReference>
<dbReference type="PROSITE" id="PS50294">
    <property type="entry name" value="WD_REPEATS_REGION"/>
    <property type="match status" value="1"/>
</dbReference>
<evidence type="ECO:0000250" key="1"/>
<evidence type="ECO:0000250" key="2">
    <source>
        <dbReference type="UniProtKB" id="Q9BR76"/>
    </source>
</evidence>
<evidence type="ECO:0000255" key="3"/>
<evidence type="ECO:0000256" key="4">
    <source>
        <dbReference type="SAM" id="MobiDB-lite"/>
    </source>
</evidence>
<evidence type="ECO:0000305" key="5"/>
<reference key="1">
    <citation type="submission" date="2004-11" db="EMBL/GenBank/DDBJ databases">
        <authorList>
            <consortium name="The German cDNA consortium"/>
        </authorList>
    </citation>
    <scope>NUCLEOTIDE SEQUENCE [LARGE SCALE MRNA]</scope>
    <source>
        <tissue>Brain cortex</tissue>
    </source>
</reference>
<sequence>MSFRKVVRQSKFRHVFGQPVKNDQCYEDIRVSRVTWDSTFCAVNPKFLAVIVEASGGGAFLVLPLSKTGRIDKAYPTVCGHTGPVLDIDWCPHNDEVIASGSEDCTVMVWQIPENGLTSPLTEPVVVLEGHTKRVGIIAWHPTARNVLLSAGCDNVVLIWNVGTAEELYRLDSLHPDLIYNVSWNRNGSLFCSACKDKSVRIIDPRQGTLVAEREKAHEGARPMRAIFLADGKVFTTGFSRMSERQLALWDPENLEEPMALQELDSSNGALLPFYDPDTSVVYVCGKGDSSIRYFEITEEPPYIHFLNTFTSKEPQRGMGSMPKRGLEVSKCEIARFYKLHERKCEPIVMTVPRKSDLFQDDLYPDTAGPEAALEAEEWVSGRDADPILISLREAYVPSKQRDLKISRRNVLSDSRPAMAPGSSRLGAPASTTAAADATPSGSLARAGEAGKLEEVMQELRALRALVKEQGERICRLEEQLGRMENGDA</sequence>
<accession>Q5NVK4</accession>
<name>COR1B_PONAB</name>
<feature type="chain" id="PRO_0000229770" description="Coronin-1B">
    <location>
        <begin position="1"/>
        <end position="489"/>
    </location>
</feature>
<feature type="repeat" description="WD 1">
    <location>
        <begin position="80"/>
        <end position="120"/>
    </location>
</feature>
<feature type="repeat" description="WD 2">
    <location>
        <begin position="130"/>
        <end position="170"/>
    </location>
</feature>
<feature type="repeat" description="WD 3">
    <location>
        <begin position="174"/>
        <end position="213"/>
    </location>
</feature>
<feature type="repeat" description="WD 4">
    <location>
        <begin position="217"/>
        <end position="260"/>
    </location>
</feature>
<feature type="repeat" description="WD 5">
    <location>
        <begin position="265"/>
        <end position="305"/>
    </location>
</feature>
<feature type="region of interest" description="Disordered" evidence="4">
    <location>
        <begin position="414"/>
        <end position="443"/>
    </location>
</feature>
<feature type="coiled-coil region" evidence="3">
    <location>
        <begin position="449"/>
        <end position="474"/>
    </location>
</feature>
<feature type="compositionally biased region" description="Low complexity" evidence="4">
    <location>
        <begin position="427"/>
        <end position="443"/>
    </location>
</feature>
<feature type="modified residue" description="Phosphoserine" evidence="2">
    <location>
        <position position="2"/>
    </location>
</feature>
<protein>
    <recommendedName>
        <fullName>Coronin-1B</fullName>
    </recommendedName>
</protein>